<evidence type="ECO:0000255" key="1">
    <source>
        <dbReference type="HAMAP-Rule" id="MF_00568"/>
    </source>
</evidence>
<comment type="function">
    <text evidence="1">Catalyzes the condensation of iminoaspartate with dihydroxyacetone phosphate to form quinolinate.</text>
</comment>
<comment type="catalytic activity">
    <reaction evidence="1">
        <text>iminosuccinate + dihydroxyacetone phosphate = quinolinate + phosphate + 2 H2O + H(+)</text>
        <dbReference type="Rhea" id="RHEA:25888"/>
        <dbReference type="ChEBI" id="CHEBI:15377"/>
        <dbReference type="ChEBI" id="CHEBI:15378"/>
        <dbReference type="ChEBI" id="CHEBI:29959"/>
        <dbReference type="ChEBI" id="CHEBI:43474"/>
        <dbReference type="ChEBI" id="CHEBI:57642"/>
        <dbReference type="ChEBI" id="CHEBI:77875"/>
        <dbReference type="EC" id="2.5.1.72"/>
    </reaction>
    <physiologicalReaction direction="left-to-right" evidence="1">
        <dbReference type="Rhea" id="RHEA:25889"/>
    </physiologicalReaction>
</comment>
<comment type="cofactor">
    <cofactor evidence="1">
        <name>[4Fe-4S] cluster</name>
        <dbReference type="ChEBI" id="CHEBI:49883"/>
    </cofactor>
    <text evidence="1">Binds 1 [4Fe-4S] cluster per subunit.</text>
</comment>
<comment type="pathway">
    <text evidence="1">Cofactor biosynthesis; NAD(+) biosynthesis; quinolinate from iminoaspartate: step 1/1.</text>
</comment>
<comment type="subcellular location">
    <subcellularLocation>
        <location evidence="1">Cytoplasm</location>
    </subcellularLocation>
</comment>
<comment type="similarity">
    <text evidence="1">Belongs to the quinolinate synthase family. Type 2 subfamily.</text>
</comment>
<keyword id="KW-0004">4Fe-4S</keyword>
<keyword id="KW-0963">Cytoplasm</keyword>
<keyword id="KW-0408">Iron</keyword>
<keyword id="KW-0411">Iron-sulfur</keyword>
<keyword id="KW-0479">Metal-binding</keyword>
<keyword id="KW-0662">Pyridine nucleotide biosynthesis</keyword>
<keyword id="KW-0808">Transferase</keyword>
<gene>
    <name evidence="1" type="primary">nadA</name>
    <name type="ordered locus">GM21_3588</name>
</gene>
<sequence length="304" mass="33681">MTQETLKSDIKALLKERNAVLLAHNYMRDEVQEIADITGDSLALSIEAAKTDADVIVFCGVHFMAESASILAPEKTVLLPRLDAGCPMADMVSVEALREMKAKLPGVPVVTYVNSSAAVKAESDICCTSANAVKVVQSMSEKEIIFAPDRNLGSYIARFTDKKFHLWEGYCPTHERLRPEVVKELKQANPDAPFVCHPECNPKVVELADHVCSTTGMYDYCKKSGAKRFIIGTEAGILWRLKRESPDKEFILASPALICPNMKLTSLEDVFEALQQMTPVVKVTEEIRIPAKRALDRMLAIPRD</sequence>
<feature type="chain" id="PRO_1000212077" description="Quinolinate synthase">
    <location>
        <begin position="1"/>
        <end position="304"/>
    </location>
</feature>
<feature type="binding site" evidence="1">
    <location>
        <position position="24"/>
    </location>
    <ligand>
        <name>iminosuccinate</name>
        <dbReference type="ChEBI" id="CHEBI:77875"/>
    </ligand>
</feature>
<feature type="binding site" evidence="1">
    <location>
        <position position="41"/>
    </location>
    <ligand>
        <name>iminosuccinate</name>
        <dbReference type="ChEBI" id="CHEBI:77875"/>
    </ligand>
</feature>
<feature type="binding site" evidence="1">
    <location>
        <position position="86"/>
    </location>
    <ligand>
        <name>[4Fe-4S] cluster</name>
        <dbReference type="ChEBI" id="CHEBI:49883"/>
    </ligand>
</feature>
<feature type="binding site" evidence="1">
    <location>
        <begin position="112"/>
        <end position="114"/>
    </location>
    <ligand>
        <name>iminosuccinate</name>
        <dbReference type="ChEBI" id="CHEBI:77875"/>
    </ligand>
</feature>
<feature type="binding site" evidence="1">
    <location>
        <position position="129"/>
    </location>
    <ligand>
        <name>iminosuccinate</name>
        <dbReference type="ChEBI" id="CHEBI:77875"/>
    </ligand>
</feature>
<feature type="binding site" evidence="1">
    <location>
        <position position="171"/>
    </location>
    <ligand>
        <name>[4Fe-4S] cluster</name>
        <dbReference type="ChEBI" id="CHEBI:49883"/>
    </ligand>
</feature>
<feature type="binding site" evidence="1">
    <location>
        <begin position="197"/>
        <end position="199"/>
    </location>
    <ligand>
        <name>iminosuccinate</name>
        <dbReference type="ChEBI" id="CHEBI:77875"/>
    </ligand>
</feature>
<feature type="binding site" evidence="1">
    <location>
        <position position="214"/>
    </location>
    <ligand>
        <name>iminosuccinate</name>
        <dbReference type="ChEBI" id="CHEBI:77875"/>
    </ligand>
</feature>
<feature type="binding site" evidence="1">
    <location>
        <position position="259"/>
    </location>
    <ligand>
        <name>[4Fe-4S] cluster</name>
        <dbReference type="ChEBI" id="CHEBI:49883"/>
    </ligand>
</feature>
<protein>
    <recommendedName>
        <fullName evidence="1">Quinolinate synthase</fullName>
        <ecNumber evidence="1">2.5.1.72</ecNumber>
    </recommendedName>
</protein>
<proteinExistence type="inferred from homology"/>
<accession>C6E657</accession>
<reference key="1">
    <citation type="submission" date="2009-07" db="EMBL/GenBank/DDBJ databases">
        <title>Complete sequence of Geobacter sp. M21.</title>
        <authorList>
            <consortium name="US DOE Joint Genome Institute"/>
            <person name="Lucas S."/>
            <person name="Copeland A."/>
            <person name="Lapidus A."/>
            <person name="Glavina del Rio T."/>
            <person name="Dalin E."/>
            <person name="Tice H."/>
            <person name="Bruce D."/>
            <person name="Goodwin L."/>
            <person name="Pitluck S."/>
            <person name="Saunders E."/>
            <person name="Brettin T."/>
            <person name="Detter J.C."/>
            <person name="Han C."/>
            <person name="Larimer F."/>
            <person name="Land M."/>
            <person name="Hauser L."/>
            <person name="Kyrpides N."/>
            <person name="Ovchinnikova G."/>
            <person name="Lovley D."/>
        </authorList>
    </citation>
    <scope>NUCLEOTIDE SEQUENCE [LARGE SCALE GENOMIC DNA]</scope>
    <source>
        <strain>M21</strain>
    </source>
</reference>
<dbReference type="EC" id="2.5.1.72" evidence="1"/>
<dbReference type="EMBL" id="CP001661">
    <property type="protein sequence ID" value="ACT19609.1"/>
    <property type="molecule type" value="Genomic_DNA"/>
</dbReference>
<dbReference type="SMR" id="C6E657"/>
<dbReference type="STRING" id="443144.GM21_3588"/>
<dbReference type="KEGG" id="gem:GM21_3588"/>
<dbReference type="eggNOG" id="COG0379">
    <property type="taxonomic scope" value="Bacteria"/>
</dbReference>
<dbReference type="HOGENOM" id="CLU_047382_0_0_7"/>
<dbReference type="OrthoDB" id="9801204at2"/>
<dbReference type="UniPathway" id="UPA00253">
    <property type="reaction ID" value="UER00327"/>
</dbReference>
<dbReference type="GO" id="GO:0005829">
    <property type="term" value="C:cytosol"/>
    <property type="evidence" value="ECO:0007669"/>
    <property type="project" value="TreeGrafter"/>
</dbReference>
<dbReference type="GO" id="GO:0051539">
    <property type="term" value="F:4 iron, 4 sulfur cluster binding"/>
    <property type="evidence" value="ECO:0007669"/>
    <property type="project" value="UniProtKB-KW"/>
</dbReference>
<dbReference type="GO" id="GO:0046872">
    <property type="term" value="F:metal ion binding"/>
    <property type="evidence" value="ECO:0007669"/>
    <property type="project" value="UniProtKB-KW"/>
</dbReference>
<dbReference type="GO" id="GO:0008987">
    <property type="term" value="F:quinolinate synthetase A activity"/>
    <property type="evidence" value="ECO:0007669"/>
    <property type="project" value="UniProtKB-UniRule"/>
</dbReference>
<dbReference type="GO" id="GO:0034628">
    <property type="term" value="P:'de novo' NAD biosynthetic process from L-aspartate"/>
    <property type="evidence" value="ECO:0007669"/>
    <property type="project" value="TreeGrafter"/>
</dbReference>
<dbReference type="FunFam" id="3.40.50.10800:FF:000003">
    <property type="entry name" value="Quinolinate synthase A"/>
    <property type="match status" value="1"/>
</dbReference>
<dbReference type="Gene3D" id="3.40.50.10800">
    <property type="entry name" value="NadA-like"/>
    <property type="match status" value="3"/>
</dbReference>
<dbReference type="HAMAP" id="MF_00568">
    <property type="entry name" value="NadA_type2"/>
    <property type="match status" value="1"/>
</dbReference>
<dbReference type="InterPro" id="IPR003473">
    <property type="entry name" value="NadA"/>
</dbReference>
<dbReference type="InterPro" id="IPR036094">
    <property type="entry name" value="NadA_sf"/>
</dbReference>
<dbReference type="InterPro" id="IPR023066">
    <property type="entry name" value="Quinolinate_synth_type2"/>
</dbReference>
<dbReference type="NCBIfam" id="TIGR00550">
    <property type="entry name" value="nadA"/>
    <property type="match status" value="1"/>
</dbReference>
<dbReference type="NCBIfam" id="NF006878">
    <property type="entry name" value="PRK09375.1-2"/>
    <property type="match status" value="1"/>
</dbReference>
<dbReference type="NCBIfam" id="NF006879">
    <property type="entry name" value="PRK09375.1-4"/>
    <property type="match status" value="1"/>
</dbReference>
<dbReference type="PANTHER" id="PTHR30573:SF0">
    <property type="entry name" value="QUINOLINATE SYNTHASE, CHLOROPLASTIC"/>
    <property type="match status" value="1"/>
</dbReference>
<dbReference type="PANTHER" id="PTHR30573">
    <property type="entry name" value="QUINOLINATE SYNTHETASE A"/>
    <property type="match status" value="1"/>
</dbReference>
<dbReference type="Pfam" id="PF02445">
    <property type="entry name" value="NadA"/>
    <property type="match status" value="1"/>
</dbReference>
<dbReference type="SUPFAM" id="SSF142754">
    <property type="entry name" value="NadA-like"/>
    <property type="match status" value="1"/>
</dbReference>
<organism>
    <name type="scientific">Geobacter sp. (strain M21)</name>
    <dbReference type="NCBI Taxonomy" id="443144"/>
    <lineage>
        <taxon>Bacteria</taxon>
        <taxon>Pseudomonadati</taxon>
        <taxon>Thermodesulfobacteriota</taxon>
        <taxon>Desulfuromonadia</taxon>
        <taxon>Geobacterales</taxon>
        <taxon>Geobacteraceae</taxon>
        <taxon>Geobacter</taxon>
    </lineage>
</organism>
<name>NADA_GEOSM</name>